<accession>Q3Z361</accession>
<name>TRHO_SHISS</name>
<proteinExistence type="inferred from homology"/>
<sequence length="350" mass="39763">MPVLHNRISNDALKAKMLVESEPRTTISFYKYFHIADPKATRDALYQLFTALNVFGRVYLAHEGINAQISVPASNVETFRAQLYAFDPALEGLRLNIALDDDGKSFWVLRMKVRDRIVADGIDDPHFDASNVGEYLQAAEVNAMLDDPDALFIDMRNHYEYEVGHFENALEIPADTFREQLPKAVEMMQAHKDKKIVMYCTGGIRCEKASAWMKHNGFNKVWHIEGGIIEYARKAREQGLPVRFIGKNFVFDERMGERISDEIIAHCHQCGAPCDSHTNCKNDGCHLLFIQCPVCAEKYKGCCSEICCEESALPPEEQRRRRAGRENGNKIFNKSRGRLNTTLGIPDPTE</sequence>
<keyword id="KW-0560">Oxidoreductase</keyword>
<keyword id="KW-1185">Reference proteome</keyword>
<keyword id="KW-0819">tRNA processing</keyword>
<feature type="chain" id="PRO_0000242943" description="tRNA uridine(34) hydroxylase">
    <location>
        <begin position="1"/>
        <end position="350"/>
    </location>
</feature>
<feature type="domain" description="Rhodanese" evidence="1">
    <location>
        <begin position="146"/>
        <end position="240"/>
    </location>
</feature>
<feature type="active site" description="Cysteine persulfide intermediate" evidence="1">
    <location>
        <position position="200"/>
    </location>
</feature>
<reference key="1">
    <citation type="journal article" date="2005" name="Nucleic Acids Res.">
        <title>Genome dynamics and diversity of Shigella species, the etiologic agents of bacillary dysentery.</title>
        <authorList>
            <person name="Yang F."/>
            <person name="Yang J."/>
            <person name="Zhang X."/>
            <person name="Chen L."/>
            <person name="Jiang Y."/>
            <person name="Yan Y."/>
            <person name="Tang X."/>
            <person name="Wang J."/>
            <person name="Xiong Z."/>
            <person name="Dong J."/>
            <person name="Xue Y."/>
            <person name="Zhu Y."/>
            <person name="Xu X."/>
            <person name="Sun L."/>
            <person name="Chen S."/>
            <person name="Nie H."/>
            <person name="Peng J."/>
            <person name="Xu J."/>
            <person name="Wang Y."/>
            <person name="Yuan Z."/>
            <person name="Wen Y."/>
            <person name="Yao Z."/>
            <person name="Shen Y."/>
            <person name="Qiang B."/>
            <person name="Hou Y."/>
            <person name="Yu J."/>
            <person name="Jin Q."/>
        </authorList>
    </citation>
    <scope>NUCLEOTIDE SEQUENCE [LARGE SCALE GENOMIC DNA]</scope>
    <source>
        <strain>Ss046</strain>
    </source>
</reference>
<evidence type="ECO:0000255" key="1">
    <source>
        <dbReference type="HAMAP-Rule" id="MF_00469"/>
    </source>
</evidence>
<organism>
    <name type="scientific">Shigella sonnei (strain Ss046)</name>
    <dbReference type="NCBI Taxonomy" id="300269"/>
    <lineage>
        <taxon>Bacteria</taxon>
        <taxon>Pseudomonadati</taxon>
        <taxon>Pseudomonadota</taxon>
        <taxon>Gammaproteobacteria</taxon>
        <taxon>Enterobacterales</taxon>
        <taxon>Enterobacteriaceae</taxon>
        <taxon>Shigella</taxon>
    </lineage>
</organism>
<protein>
    <recommendedName>
        <fullName evidence="1">tRNA uridine(34) hydroxylase</fullName>
        <ecNumber evidence="1">1.14.-.-</ecNumber>
    </recommendedName>
    <alternativeName>
        <fullName evidence="1">tRNA hydroxylation protein O</fullName>
    </alternativeName>
</protein>
<gene>
    <name evidence="1" type="primary">trhO</name>
    <name type="synonym">yceA</name>
    <name type="ordered locus">SSON_1075</name>
</gene>
<dbReference type="EC" id="1.14.-.-" evidence="1"/>
<dbReference type="EMBL" id="CP000038">
    <property type="protein sequence ID" value="AAZ87801.1"/>
    <property type="molecule type" value="Genomic_DNA"/>
</dbReference>
<dbReference type="RefSeq" id="WP_005139946.1">
    <property type="nucleotide sequence ID" value="NC_007384.1"/>
</dbReference>
<dbReference type="SMR" id="Q3Z361"/>
<dbReference type="KEGG" id="ssn:SSON_1075"/>
<dbReference type="HOGENOM" id="CLU_038878_1_1_6"/>
<dbReference type="Proteomes" id="UP000002529">
    <property type="component" value="Chromosome"/>
</dbReference>
<dbReference type="GO" id="GO:0016705">
    <property type="term" value="F:oxidoreductase activity, acting on paired donors, with incorporation or reduction of molecular oxygen"/>
    <property type="evidence" value="ECO:0007669"/>
    <property type="project" value="UniProtKB-UniRule"/>
</dbReference>
<dbReference type="GO" id="GO:0006400">
    <property type="term" value="P:tRNA modification"/>
    <property type="evidence" value="ECO:0007669"/>
    <property type="project" value="UniProtKB-UniRule"/>
</dbReference>
<dbReference type="CDD" id="cd01518">
    <property type="entry name" value="RHOD_YceA"/>
    <property type="match status" value="1"/>
</dbReference>
<dbReference type="Gene3D" id="3.30.70.100">
    <property type="match status" value="1"/>
</dbReference>
<dbReference type="Gene3D" id="3.40.250.10">
    <property type="entry name" value="Rhodanese-like domain"/>
    <property type="match status" value="1"/>
</dbReference>
<dbReference type="HAMAP" id="MF_00469">
    <property type="entry name" value="TrhO"/>
    <property type="match status" value="1"/>
</dbReference>
<dbReference type="InterPro" id="IPR001763">
    <property type="entry name" value="Rhodanese-like_dom"/>
</dbReference>
<dbReference type="InterPro" id="IPR036873">
    <property type="entry name" value="Rhodanese-like_dom_sf"/>
</dbReference>
<dbReference type="InterPro" id="IPR022111">
    <property type="entry name" value="Rhodanese_C"/>
</dbReference>
<dbReference type="InterPro" id="IPR020936">
    <property type="entry name" value="TrhO"/>
</dbReference>
<dbReference type="InterPro" id="IPR040503">
    <property type="entry name" value="TRHO_N"/>
</dbReference>
<dbReference type="NCBIfam" id="NF001133">
    <property type="entry name" value="PRK00142.1-1"/>
    <property type="match status" value="1"/>
</dbReference>
<dbReference type="PANTHER" id="PTHR43846:SF1">
    <property type="entry name" value="TRNA URIDINE(34) HYDROXYLASE"/>
    <property type="match status" value="1"/>
</dbReference>
<dbReference type="PANTHER" id="PTHR43846">
    <property type="entry name" value="UPF0176 PROTEIN YCEA"/>
    <property type="match status" value="1"/>
</dbReference>
<dbReference type="Pfam" id="PF00581">
    <property type="entry name" value="Rhodanese"/>
    <property type="match status" value="1"/>
</dbReference>
<dbReference type="Pfam" id="PF12368">
    <property type="entry name" value="Rhodanese_C"/>
    <property type="match status" value="1"/>
</dbReference>
<dbReference type="Pfam" id="PF17773">
    <property type="entry name" value="UPF0176_N"/>
    <property type="match status" value="1"/>
</dbReference>
<dbReference type="SMART" id="SM00450">
    <property type="entry name" value="RHOD"/>
    <property type="match status" value="1"/>
</dbReference>
<dbReference type="SUPFAM" id="SSF52821">
    <property type="entry name" value="Rhodanese/Cell cycle control phosphatase"/>
    <property type="match status" value="1"/>
</dbReference>
<dbReference type="PROSITE" id="PS50206">
    <property type="entry name" value="RHODANESE_3"/>
    <property type="match status" value="1"/>
</dbReference>
<comment type="function">
    <text evidence="1">Catalyzes oxygen-dependent 5-hydroxyuridine (ho5U) modification at position 34 in tRNAs.</text>
</comment>
<comment type="catalytic activity">
    <reaction evidence="1">
        <text>uridine(34) in tRNA + AH2 + O2 = 5-hydroxyuridine(34) in tRNA + A + H2O</text>
        <dbReference type="Rhea" id="RHEA:64224"/>
        <dbReference type="Rhea" id="RHEA-COMP:11727"/>
        <dbReference type="Rhea" id="RHEA-COMP:13381"/>
        <dbReference type="ChEBI" id="CHEBI:13193"/>
        <dbReference type="ChEBI" id="CHEBI:15377"/>
        <dbReference type="ChEBI" id="CHEBI:15379"/>
        <dbReference type="ChEBI" id="CHEBI:17499"/>
        <dbReference type="ChEBI" id="CHEBI:65315"/>
        <dbReference type="ChEBI" id="CHEBI:136877"/>
    </reaction>
</comment>
<comment type="similarity">
    <text evidence="1">Belongs to the TrhO family.</text>
</comment>